<keyword id="KW-0044">Antibiotic</keyword>
<keyword id="KW-0929">Antimicrobial</keyword>
<keyword id="KW-0903">Direct protein sequencing</keyword>
<keyword id="KW-0295">Fungicide</keyword>
<keyword id="KW-0732">Signal</keyword>
<feature type="signal peptide" evidence="1">
    <location>
        <begin position="1"/>
        <end position="26"/>
    </location>
</feature>
<feature type="propeptide" id="PRO_0000386443" evidence="1 3">
    <location>
        <begin position="27"/>
        <end position="57"/>
    </location>
</feature>
<feature type="peptide" id="PRO_0000386444" description="Ixosin-B" evidence="3">
    <location>
        <begin position="58"/>
        <end position="89"/>
    </location>
</feature>
<feature type="region of interest" description="Disordered" evidence="2">
    <location>
        <begin position="68"/>
        <end position="89"/>
    </location>
</feature>
<feature type="compositionally biased region" description="Basic and acidic residues" evidence="2">
    <location>
        <begin position="76"/>
        <end position="89"/>
    </location>
</feature>
<proteinExistence type="evidence at protein level"/>
<protein>
    <recommendedName>
        <fullName evidence="4">Ixosin-B</fullName>
    </recommendedName>
</protein>
<reference evidence="5 6" key="1">
    <citation type="journal article" date="2008" name="Comp. Biochem. Physiol.">
        <title>Purification and cloning of a novel antimicrobial peptide from salivary glands of the hard tick, Ixodes sinensis.</title>
        <authorList>
            <person name="Liu Z."/>
            <person name="Liu H."/>
            <person name="Liu X."/>
            <person name="Wu X."/>
        </authorList>
    </citation>
    <scope>NUCLEOTIDE SEQUENCE [MRNA]</scope>
    <scope>PROTEIN SEQUENCE OF 58-89</scope>
    <scope>FUNCTION</scope>
    <scope>MASS SPECTROMETRY</scope>
    <source>
        <tissue evidence="3">Salivary gland</tissue>
    </source>
</reference>
<name>IXOSB_IXOSI</name>
<evidence type="ECO:0000255" key="1"/>
<evidence type="ECO:0000256" key="2">
    <source>
        <dbReference type="SAM" id="MobiDB-lite"/>
    </source>
</evidence>
<evidence type="ECO:0000269" key="3">
    <source>
    </source>
</evidence>
<evidence type="ECO:0000303" key="4">
    <source>
    </source>
</evidence>
<evidence type="ECO:0000305" key="5"/>
<evidence type="ECO:0000312" key="6">
    <source>
        <dbReference type="EMBL" id="ABU24471.1"/>
    </source>
</evidence>
<accession>A7UDM9</accession>
<organism>
    <name type="scientific">Ixodes sinensis</name>
    <name type="common">Hard tick</name>
    <dbReference type="NCBI Taxonomy" id="339422"/>
    <lineage>
        <taxon>Eukaryota</taxon>
        <taxon>Metazoa</taxon>
        <taxon>Ecdysozoa</taxon>
        <taxon>Arthropoda</taxon>
        <taxon>Chelicerata</taxon>
        <taxon>Arachnida</taxon>
        <taxon>Acari</taxon>
        <taxon>Parasitiformes</taxon>
        <taxon>Ixodida</taxon>
        <taxon>Ixodoidea</taxon>
        <taxon>Ixodidae</taxon>
        <taxon>Ixodinae</taxon>
        <taxon>Ixodes</taxon>
    </lineage>
</organism>
<dbReference type="EMBL" id="EU047746">
    <property type="protein sequence ID" value="ABU24471.1"/>
    <property type="molecule type" value="mRNA"/>
</dbReference>
<dbReference type="GO" id="GO:0050832">
    <property type="term" value="P:defense response to fungus"/>
    <property type="evidence" value="ECO:0000314"/>
    <property type="project" value="UniProtKB"/>
</dbReference>
<dbReference type="GO" id="GO:0050829">
    <property type="term" value="P:defense response to Gram-negative bacterium"/>
    <property type="evidence" value="ECO:0000314"/>
    <property type="project" value="UniProtKB"/>
</dbReference>
<dbReference type="GO" id="GO:0050830">
    <property type="term" value="P:defense response to Gram-positive bacterium"/>
    <property type="evidence" value="ECO:0000314"/>
    <property type="project" value="UniProtKB"/>
</dbReference>
<dbReference type="GO" id="GO:0031640">
    <property type="term" value="P:killing of cells of another organism"/>
    <property type="evidence" value="ECO:0007669"/>
    <property type="project" value="UniProtKB-KW"/>
</dbReference>
<comment type="function">
    <text evidence="3">Has antifungal activity against C.albicans. Has antibacterial activity against the Gram-positive bacterium S.aureus and the Gram-negative bacterium E.coli. Lacks hemolytic activity against rabbit erythrocytes.</text>
</comment>
<comment type="mass spectrometry"/>
<sequence>MASGWTHRLLLLAAVVTLGATPIAAASMEYLVTAPGYLTPNADIKITAVVTNPSSAGQLKVDLWGTRSGIQPEQHSSGKSDVRRWRSRY</sequence>